<name>LOLD_EHRCR</name>
<organism>
    <name type="scientific">Ehrlichia chaffeensis (strain ATCC CRL-10679 / Arkansas)</name>
    <dbReference type="NCBI Taxonomy" id="205920"/>
    <lineage>
        <taxon>Bacteria</taxon>
        <taxon>Pseudomonadati</taxon>
        <taxon>Pseudomonadota</taxon>
        <taxon>Alphaproteobacteria</taxon>
        <taxon>Rickettsiales</taxon>
        <taxon>Anaplasmataceae</taxon>
        <taxon>Ehrlichia</taxon>
    </lineage>
</organism>
<reference key="1">
    <citation type="journal article" date="2006" name="PLoS Genet.">
        <title>Comparative genomics of emerging human ehrlichiosis agents.</title>
        <authorList>
            <person name="Dunning Hotopp J.C."/>
            <person name="Lin M."/>
            <person name="Madupu R."/>
            <person name="Crabtree J."/>
            <person name="Angiuoli S.V."/>
            <person name="Eisen J.A."/>
            <person name="Seshadri R."/>
            <person name="Ren Q."/>
            <person name="Wu M."/>
            <person name="Utterback T.R."/>
            <person name="Smith S."/>
            <person name="Lewis M."/>
            <person name="Khouri H."/>
            <person name="Zhang C."/>
            <person name="Niu H."/>
            <person name="Lin Q."/>
            <person name="Ohashi N."/>
            <person name="Zhi N."/>
            <person name="Nelson W.C."/>
            <person name="Brinkac L.M."/>
            <person name="Dodson R.J."/>
            <person name="Rosovitz M.J."/>
            <person name="Sundaram J.P."/>
            <person name="Daugherty S.C."/>
            <person name="Davidsen T."/>
            <person name="Durkin A.S."/>
            <person name="Gwinn M.L."/>
            <person name="Haft D.H."/>
            <person name="Selengut J.D."/>
            <person name="Sullivan S.A."/>
            <person name="Zafar N."/>
            <person name="Zhou L."/>
            <person name="Benahmed F."/>
            <person name="Forberger H."/>
            <person name="Halpin R."/>
            <person name="Mulligan S."/>
            <person name="Robinson J."/>
            <person name="White O."/>
            <person name="Rikihisa Y."/>
            <person name="Tettelin H."/>
        </authorList>
    </citation>
    <scope>NUCLEOTIDE SEQUENCE [LARGE SCALE GENOMIC DNA]</scope>
    <source>
        <strain>ATCC CRL-10679 / Arkansas</strain>
    </source>
</reference>
<evidence type="ECO:0000255" key="1">
    <source>
        <dbReference type="HAMAP-Rule" id="MF_01708"/>
    </source>
</evidence>
<keyword id="KW-0067">ATP-binding</keyword>
<keyword id="KW-0997">Cell inner membrane</keyword>
<keyword id="KW-1003">Cell membrane</keyword>
<keyword id="KW-0472">Membrane</keyword>
<keyword id="KW-0547">Nucleotide-binding</keyword>
<keyword id="KW-1185">Reference proteome</keyword>
<keyword id="KW-1278">Translocase</keyword>
<keyword id="KW-0813">Transport</keyword>
<protein>
    <recommendedName>
        <fullName evidence="1">Lipoprotein-releasing system ATP-binding protein LolD</fullName>
        <ecNumber evidence="1">7.6.2.-</ecNumber>
    </recommendedName>
</protein>
<sequence length="235" mass="25976">MSTVFALANIYKSFGRNKEVPVIVNATLQIKKGEIVALIGKSGSGKSTLLHIAGLLDTPSSGSILLNNIECTDKTSDKDKTYLRRHFLGFIYQFHHLLQEFSVLENVMLPQIITGKSKSIAKKNAMEILERVRLQDKLSMPISQLSGGERQRVAIARSLINCPLIVLADEPTGSLDNNTALEVFSLLQEYAKEKNIAILLATHNYSLAQKACRIVKIDSGILRSYSIDESGFNKI</sequence>
<feature type="chain" id="PRO_0000272079" description="Lipoprotein-releasing system ATP-binding protein LolD">
    <location>
        <begin position="1"/>
        <end position="235"/>
    </location>
</feature>
<feature type="domain" description="ABC transporter" evidence="1">
    <location>
        <begin position="5"/>
        <end position="235"/>
    </location>
</feature>
<feature type="binding site" evidence="1">
    <location>
        <begin position="40"/>
        <end position="47"/>
    </location>
    <ligand>
        <name>ATP</name>
        <dbReference type="ChEBI" id="CHEBI:30616"/>
    </ligand>
</feature>
<comment type="function">
    <text evidence="1">Part of the ABC transporter complex LolCDE involved in the translocation of mature outer membrane-directed lipoproteins, from the inner membrane to the periplasmic chaperone, LolA. Responsible for the formation of the LolA-lipoprotein complex in an ATP-dependent manner.</text>
</comment>
<comment type="subunit">
    <text evidence="1">The complex is composed of two ATP-binding proteins (LolD) and two transmembrane proteins (LolC and LolE).</text>
</comment>
<comment type="subcellular location">
    <subcellularLocation>
        <location evidence="1">Cell inner membrane</location>
        <topology evidence="1">Peripheral membrane protein</topology>
    </subcellularLocation>
</comment>
<comment type="similarity">
    <text evidence="1">Belongs to the ABC transporter superfamily. Lipoprotein translocase (TC 3.A.1.125) family.</text>
</comment>
<dbReference type="EC" id="7.6.2.-" evidence="1"/>
<dbReference type="EMBL" id="CP000236">
    <property type="protein sequence ID" value="ABD44785.1"/>
    <property type="molecule type" value="Genomic_DNA"/>
</dbReference>
<dbReference type="RefSeq" id="WP_006010124.1">
    <property type="nucleotide sequence ID" value="NC_007799.1"/>
</dbReference>
<dbReference type="SMR" id="Q2GHT4"/>
<dbReference type="STRING" id="205920.ECH_0174"/>
<dbReference type="KEGG" id="ech:ECH_0174"/>
<dbReference type="eggNOG" id="COG1136">
    <property type="taxonomic scope" value="Bacteria"/>
</dbReference>
<dbReference type="HOGENOM" id="CLU_000604_1_22_5"/>
<dbReference type="OrthoDB" id="9802264at2"/>
<dbReference type="Proteomes" id="UP000008320">
    <property type="component" value="Chromosome"/>
</dbReference>
<dbReference type="GO" id="GO:0005886">
    <property type="term" value="C:plasma membrane"/>
    <property type="evidence" value="ECO:0007669"/>
    <property type="project" value="UniProtKB-SubCell"/>
</dbReference>
<dbReference type="GO" id="GO:0005524">
    <property type="term" value="F:ATP binding"/>
    <property type="evidence" value="ECO:0007669"/>
    <property type="project" value="UniProtKB-KW"/>
</dbReference>
<dbReference type="GO" id="GO:0016887">
    <property type="term" value="F:ATP hydrolysis activity"/>
    <property type="evidence" value="ECO:0007669"/>
    <property type="project" value="InterPro"/>
</dbReference>
<dbReference type="CDD" id="cd03255">
    <property type="entry name" value="ABC_MJ0796_LolCDE_FtsE"/>
    <property type="match status" value="1"/>
</dbReference>
<dbReference type="Gene3D" id="3.40.50.300">
    <property type="entry name" value="P-loop containing nucleotide triphosphate hydrolases"/>
    <property type="match status" value="1"/>
</dbReference>
<dbReference type="InterPro" id="IPR003593">
    <property type="entry name" value="AAA+_ATPase"/>
</dbReference>
<dbReference type="InterPro" id="IPR003439">
    <property type="entry name" value="ABC_transporter-like_ATP-bd"/>
</dbReference>
<dbReference type="InterPro" id="IPR017871">
    <property type="entry name" value="ABC_transporter-like_CS"/>
</dbReference>
<dbReference type="InterPro" id="IPR017911">
    <property type="entry name" value="MacB-like_ATP-bd"/>
</dbReference>
<dbReference type="InterPro" id="IPR027417">
    <property type="entry name" value="P-loop_NTPase"/>
</dbReference>
<dbReference type="PANTHER" id="PTHR42798:SF7">
    <property type="entry name" value="ALPHA-D-RIBOSE 1-METHYLPHOSPHONATE 5-TRIPHOSPHATE SYNTHASE SUBUNIT PHNL"/>
    <property type="match status" value="1"/>
</dbReference>
<dbReference type="PANTHER" id="PTHR42798">
    <property type="entry name" value="LIPOPROTEIN-RELEASING SYSTEM ATP-BINDING PROTEIN LOLD"/>
    <property type="match status" value="1"/>
</dbReference>
<dbReference type="Pfam" id="PF00005">
    <property type="entry name" value="ABC_tran"/>
    <property type="match status" value="1"/>
</dbReference>
<dbReference type="SMART" id="SM00382">
    <property type="entry name" value="AAA"/>
    <property type="match status" value="1"/>
</dbReference>
<dbReference type="SUPFAM" id="SSF52540">
    <property type="entry name" value="P-loop containing nucleoside triphosphate hydrolases"/>
    <property type="match status" value="1"/>
</dbReference>
<dbReference type="PROSITE" id="PS00211">
    <property type="entry name" value="ABC_TRANSPORTER_1"/>
    <property type="match status" value="1"/>
</dbReference>
<dbReference type="PROSITE" id="PS50893">
    <property type="entry name" value="ABC_TRANSPORTER_2"/>
    <property type="match status" value="1"/>
</dbReference>
<dbReference type="PROSITE" id="PS51244">
    <property type="entry name" value="LOLD"/>
    <property type="match status" value="1"/>
</dbReference>
<accession>Q2GHT4</accession>
<gene>
    <name evidence="1" type="primary">lolD</name>
    <name type="ordered locus">ECH_0174</name>
</gene>
<proteinExistence type="inferred from homology"/>